<gene>
    <name evidence="1" type="primary">xseB</name>
    <name type="ordered locus">Pfl01_5005</name>
</gene>
<comment type="function">
    <text evidence="1">Bidirectionally degrades single-stranded DNA into large acid-insoluble oligonucleotides, which are then degraded further into small acid-soluble oligonucleotides.</text>
</comment>
<comment type="catalytic activity">
    <reaction evidence="1">
        <text>Exonucleolytic cleavage in either 5'- to 3'- or 3'- to 5'-direction to yield nucleoside 5'-phosphates.</text>
        <dbReference type="EC" id="3.1.11.6"/>
    </reaction>
</comment>
<comment type="subunit">
    <text evidence="1">Heterooligomer composed of large and small subunits.</text>
</comment>
<comment type="subcellular location">
    <subcellularLocation>
        <location evidence="1">Cytoplasm</location>
    </subcellularLocation>
</comment>
<comment type="similarity">
    <text evidence="1">Belongs to the XseB family.</text>
</comment>
<reference key="1">
    <citation type="journal article" date="2009" name="Genome Biol.">
        <title>Genomic and genetic analyses of diversity and plant interactions of Pseudomonas fluorescens.</title>
        <authorList>
            <person name="Silby M.W."/>
            <person name="Cerdeno-Tarraga A.M."/>
            <person name="Vernikos G.S."/>
            <person name="Giddens S.R."/>
            <person name="Jackson R.W."/>
            <person name="Preston G.M."/>
            <person name="Zhang X.-X."/>
            <person name="Moon C.D."/>
            <person name="Gehrig S.M."/>
            <person name="Godfrey S.A.C."/>
            <person name="Knight C.G."/>
            <person name="Malone J.G."/>
            <person name="Robinson Z."/>
            <person name="Spiers A.J."/>
            <person name="Harris S."/>
            <person name="Challis G.L."/>
            <person name="Yaxley A.M."/>
            <person name="Harris D."/>
            <person name="Seeger K."/>
            <person name="Murphy L."/>
            <person name="Rutter S."/>
            <person name="Squares R."/>
            <person name="Quail M.A."/>
            <person name="Saunders E."/>
            <person name="Mavromatis K."/>
            <person name="Brettin T.S."/>
            <person name="Bentley S.D."/>
            <person name="Hothersall J."/>
            <person name="Stephens E."/>
            <person name="Thomas C.M."/>
            <person name="Parkhill J."/>
            <person name="Levy S.B."/>
            <person name="Rainey P.B."/>
            <person name="Thomson N.R."/>
        </authorList>
    </citation>
    <scope>NUCLEOTIDE SEQUENCE [LARGE SCALE GENOMIC DNA]</scope>
    <source>
        <strain>Pf0-1</strain>
    </source>
</reference>
<protein>
    <recommendedName>
        <fullName evidence="1">Exodeoxyribonuclease 7 small subunit</fullName>
        <ecNumber evidence="1">3.1.11.6</ecNumber>
    </recommendedName>
    <alternativeName>
        <fullName evidence="1">Exodeoxyribonuclease VII small subunit</fullName>
        <shortName evidence="1">Exonuclease VII small subunit</shortName>
    </alternativeName>
</protein>
<keyword id="KW-0963">Cytoplasm</keyword>
<keyword id="KW-0269">Exonuclease</keyword>
<keyword id="KW-0378">Hydrolase</keyword>
<keyword id="KW-0540">Nuclease</keyword>
<proteinExistence type="inferred from homology"/>
<feature type="chain" id="PRO_0000303737" description="Exodeoxyribonuclease 7 small subunit">
    <location>
        <begin position="1"/>
        <end position="80"/>
    </location>
</feature>
<dbReference type="EC" id="3.1.11.6" evidence="1"/>
<dbReference type="EMBL" id="CP000094">
    <property type="protein sequence ID" value="ABA76742.1"/>
    <property type="molecule type" value="Genomic_DNA"/>
</dbReference>
<dbReference type="RefSeq" id="WP_007894317.1">
    <property type="nucleotide sequence ID" value="NC_007492.2"/>
</dbReference>
<dbReference type="SMR" id="Q3K662"/>
<dbReference type="KEGG" id="pfo:Pfl01_5005"/>
<dbReference type="eggNOG" id="COG1722">
    <property type="taxonomic scope" value="Bacteria"/>
</dbReference>
<dbReference type="HOGENOM" id="CLU_145918_3_3_6"/>
<dbReference type="Proteomes" id="UP000002704">
    <property type="component" value="Chromosome"/>
</dbReference>
<dbReference type="GO" id="GO:0005829">
    <property type="term" value="C:cytosol"/>
    <property type="evidence" value="ECO:0007669"/>
    <property type="project" value="TreeGrafter"/>
</dbReference>
<dbReference type="GO" id="GO:0009318">
    <property type="term" value="C:exodeoxyribonuclease VII complex"/>
    <property type="evidence" value="ECO:0007669"/>
    <property type="project" value="InterPro"/>
</dbReference>
<dbReference type="GO" id="GO:0008855">
    <property type="term" value="F:exodeoxyribonuclease VII activity"/>
    <property type="evidence" value="ECO:0007669"/>
    <property type="project" value="UniProtKB-UniRule"/>
</dbReference>
<dbReference type="GO" id="GO:0006308">
    <property type="term" value="P:DNA catabolic process"/>
    <property type="evidence" value="ECO:0007669"/>
    <property type="project" value="UniProtKB-UniRule"/>
</dbReference>
<dbReference type="Gene3D" id="1.10.287.1040">
    <property type="entry name" value="Exonuclease VII, small subunit"/>
    <property type="match status" value="1"/>
</dbReference>
<dbReference type="HAMAP" id="MF_00337">
    <property type="entry name" value="Exonuc_7_S"/>
    <property type="match status" value="1"/>
</dbReference>
<dbReference type="InterPro" id="IPR003761">
    <property type="entry name" value="Exonuc_VII_S"/>
</dbReference>
<dbReference type="InterPro" id="IPR037004">
    <property type="entry name" value="Exonuc_VII_ssu_sf"/>
</dbReference>
<dbReference type="NCBIfam" id="NF002140">
    <property type="entry name" value="PRK00977.1-4"/>
    <property type="match status" value="1"/>
</dbReference>
<dbReference type="NCBIfam" id="TIGR01280">
    <property type="entry name" value="xseB"/>
    <property type="match status" value="1"/>
</dbReference>
<dbReference type="PANTHER" id="PTHR34137">
    <property type="entry name" value="EXODEOXYRIBONUCLEASE 7 SMALL SUBUNIT"/>
    <property type="match status" value="1"/>
</dbReference>
<dbReference type="PANTHER" id="PTHR34137:SF1">
    <property type="entry name" value="EXODEOXYRIBONUCLEASE 7 SMALL SUBUNIT"/>
    <property type="match status" value="1"/>
</dbReference>
<dbReference type="Pfam" id="PF02609">
    <property type="entry name" value="Exonuc_VII_S"/>
    <property type="match status" value="1"/>
</dbReference>
<dbReference type="PIRSF" id="PIRSF006488">
    <property type="entry name" value="Exonuc_VII_S"/>
    <property type="match status" value="1"/>
</dbReference>
<dbReference type="SUPFAM" id="SSF116842">
    <property type="entry name" value="XseB-like"/>
    <property type="match status" value="1"/>
</dbReference>
<organism>
    <name type="scientific">Pseudomonas fluorescens (strain Pf0-1)</name>
    <dbReference type="NCBI Taxonomy" id="205922"/>
    <lineage>
        <taxon>Bacteria</taxon>
        <taxon>Pseudomonadati</taxon>
        <taxon>Pseudomonadota</taxon>
        <taxon>Gammaproteobacteria</taxon>
        <taxon>Pseudomonadales</taxon>
        <taxon>Pseudomonadaceae</taxon>
        <taxon>Pseudomonas</taxon>
    </lineage>
</organism>
<accession>Q3K662</accession>
<evidence type="ECO:0000255" key="1">
    <source>
        <dbReference type="HAMAP-Rule" id="MF_00337"/>
    </source>
</evidence>
<sequence length="80" mass="8848">MARKKAALDFEQSLADLQTLVERLENGELSLEDSLTAFEQGIGLTRDCQAALAQAEQKVQVLLERDGELAEEPFDADQPE</sequence>
<name>EX7S_PSEPF</name>